<gene>
    <name type="primary">yeeL</name>
    <name type="ordered locus">b4497</name>
    <name type="ORF">b1979/b1980</name>
</gene>
<proteinExistence type="uncertain"/>
<name>YEEL_ECOLI</name>
<feature type="chain" id="PRO_0000169109" description="Putative uncharacterized protein YeeL">
    <location>
        <begin position="1"/>
        <end position="234"/>
    </location>
</feature>
<evidence type="ECO:0000305" key="1"/>
<sequence length="234" mass="26725">MFLASLLRRIAFSYYDYKAYNFNIEKTDFVVIHIPDQIGDAMAIFPVIRALELHKIKHLLIVTSTINLEVFNALKLEQTKLTLVTMTMQDHATLKEIKDLAKNITQQYGTPDLCIEGMRKKNLKTMLFISQLKAKTNFQVVGITMNCFSPLCKNASSMDQKLRAPVPMTWAFMMREAGFPAVRPIYELPLSEDVLDEVREEMRSLGSYIAFNLEGSSQERTFSLSIAENLIAKI</sequence>
<protein>
    <recommendedName>
        <fullName>Putative uncharacterized protein YeeL</fullName>
    </recommendedName>
</protein>
<comment type="caution">
    <text evidence="1">Could be the product of a pseudogene, it is missing about 120 C-terminal residues compared to orthologs.</text>
</comment>
<reference key="1">
    <citation type="journal article" date="1997" name="Science">
        <title>The complete genome sequence of Escherichia coli K-12.</title>
        <authorList>
            <person name="Blattner F.R."/>
            <person name="Plunkett G. III"/>
            <person name="Bloch C.A."/>
            <person name="Perna N.T."/>
            <person name="Burland V."/>
            <person name="Riley M."/>
            <person name="Collado-Vides J."/>
            <person name="Glasner J.D."/>
            <person name="Rode C.K."/>
            <person name="Mayhew G.F."/>
            <person name="Gregor J."/>
            <person name="Davis N.W."/>
            <person name="Kirkpatrick H.A."/>
            <person name="Goeden M.A."/>
            <person name="Rose D.J."/>
            <person name="Mau B."/>
            <person name="Shao Y."/>
        </authorList>
    </citation>
    <scope>NUCLEOTIDE SEQUENCE [LARGE SCALE GENOMIC DNA]</scope>
    <source>
        <strain>K12 / MG1655 / ATCC 47076</strain>
    </source>
</reference>
<keyword id="KW-1185">Reference proteome</keyword>
<accession>P76349</accession>
<accession>P76348</accession>
<organism>
    <name type="scientific">Escherichia coli (strain K12)</name>
    <dbReference type="NCBI Taxonomy" id="83333"/>
    <lineage>
        <taxon>Bacteria</taxon>
        <taxon>Pseudomonadati</taxon>
        <taxon>Pseudomonadota</taxon>
        <taxon>Gammaproteobacteria</taxon>
        <taxon>Enterobacterales</taxon>
        <taxon>Enterobacteriaceae</taxon>
        <taxon>Escherichia</taxon>
    </lineage>
</organism>
<dbReference type="EMBL" id="U00096">
    <property type="status" value="NOT_ANNOTATED_CDS"/>
    <property type="molecule type" value="Genomic_DNA"/>
</dbReference>
<dbReference type="FunCoup" id="P76349">
    <property type="interactions" value="1"/>
</dbReference>
<dbReference type="IntAct" id="P76349">
    <property type="interactions" value="2"/>
</dbReference>
<dbReference type="InParanoid" id="P76349"/>
<dbReference type="Proteomes" id="UP000000625">
    <property type="component" value="Chromosome"/>
</dbReference>
<dbReference type="SUPFAM" id="SSF53756">
    <property type="entry name" value="UDP-Glycosyltransferase/glycogen phosphorylase"/>
    <property type="match status" value="1"/>
</dbReference>